<sequence>MAQAKKSVDIKNIRNFSIIAHIDHGKSTLADRFIQMCGGLQDREMQAQVLDSMELERERGITIKAASVTLYYTHPNGQEYQLNFIDTPGHVDFSYEVSRSLAACEGALLVVDAAQGVEAQSVANCYTAIEQGLEVLPILNKIDLPQAEPERVIHEIEEIIGIEATNAPTCSAKTGLGVEGVLETLVDVIPAPTGDREAPLQALIIDSWFDNYLGVVSLVRIKDGRIRKGDKMLVKSTGQTHIVTSVGVFNPKHTETGVLEAGEVGFVIAGIKDIFGAPVGDTITLSTTPEVASLPGFKKVKPQVYAGLFPIDASDFEPFREALQKLQINDSALFFEPESSDALGFGFRCGFLGMLHMEIVQERLEREYDLDLISSAPTVVYEAVTKKGDTIYIDSPSKMPDGSVVEDLREPIAECHILVPQEYLGNVMTLCIERRGVQKDMKFLGNQVSITFEIPMAEVVMDFFDKLKSCSRGFASLDYNFIRFESSSLVKVDVLINGEKVDALAMICHRNDARHRGIALVEKMKDLIPRQMFDVAIQAAIGAQIIARSTVKAMRKNVLAKCYGGDVSRKKKLLAKQKEGKKRMKQVGSVEIPQEAFLAVLKVER</sequence>
<evidence type="ECO:0000255" key="1">
    <source>
        <dbReference type="HAMAP-Rule" id="MF_00071"/>
    </source>
</evidence>
<dbReference type="EC" id="3.6.5.n1" evidence="1"/>
<dbReference type="EMBL" id="CP001182">
    <property type="protein sequence ID" value="ACJ42307.1"/>
    <property type="molecule type" value="Genomic_DNA"/>
</dbReference>
<dbReference type="RefSeq" id="WP_000035781.1">
    <property type="nucleotide sequence ID" value="NC_011586.2"/>
</dbReference>
<dbReference type="SMR" id="B7I580"/>
<dbReference type="GeneID" id="92894832"/>
<dbReference type="KEGG" id="abn:AB57_2964"/>
<dbReference type="HOGENOM" id="CLU_009995_3_3_6"/>
<dbReference type="Proteomes" id="UP000007094">
    <property type="component" value="Chromosome"/>
</dbReference>
<dbReference type="GO" id="GO:0005886">
    <property type="term" value="C:plasma membrane"/>
    <property type="evidence" value="ECO:0007669"/>
    <property type="project" value="UniProtKB-SubCell"/>
</dbReference>
<dbReference type="GO" id="GO:0005525">
    <property type="term" value="F:GTP binding"/>
    <property type="evidence" value="ECO:0007669"/>
    <property type="project" value="UniProtKB-UniRule"/>
</dbReference>
<dbReference type="GO" id="GO:0003924">
    <property type="term" value="F:GTPase activity"/>
    <property type="evidence" value="ECO:0007669"/>
    <property type="project" value="UniProtKB-UniRule"/>
</dbReference>
<dbReference type="GO" id="GO:0097216">
    <property type="term" value="F:guanosine tetraphosphate binding"/>
    <property type="evidence" value="ECO:0007669"/>
    <property type="project" value="UniProtKB-ARBA"/>
</dbReference>
<dbReference type="GO" id="GO:0043022">
    <property type="term" value="F:ribosome binding"/>
    <property type="evidence" value="ECO:0007669"/>
    <property type="project" value="UniProtKB-UniRule"/>
</dbReference>
<dbReference type="GO" id="GO:0003746">
    <property type="term" value="F:translation elongation factor activity"/>
    <property type="evidence" value="ECO:0007669"/>
    <property type="project" value="UniProtKB-UniRule"/>
</dbReference>
<dbReference type="GO" id="GO:0045727">
    <property type="term" value="P:positive regulation of translation"/>
    <property type="evidence" value="ECO:0007669"/>
    <property type="project" value="UniProtKB-UniRule"/>
</dbReference>
<dbReference type="CDD" id="cd03699">
    <property type="entry name" value="EF4_II"/>
    <property type="match status" value="1"/>
</dbReference>
<dbReference type="CDD" id="cd16260">
    <property type="entry name" value="EF4_III"/>
    <property type="match status" value="1"/>
</dbReference>
<dbReference type="CDD" id="cd01890">
    <property type="entry name" value="LepA"/>
    <property type="match status" value="1"/>
</dbReference>
<dbReference type="CDD" id="cd03709">
    <property type="entry name" value="lepA_C"/>
    <property type="match status" value="1"/>
</dbReference>
<dbReference type="FunFam" id="3.40.50.300:FF:000078">
    <property type="entry name" value="Elongation factor 4"/>
    <property type="match status" value="1"/>
</dbReference>
<dbReference type="FunFam" id="2.40.30.10:FF:000015">
    <property type="entry name" value="Translation factor GUF1, mitochondrial"/>
    <property type="match status" value="1"/>
</dbReference>
<dbReference type="FunFam" id="3.30.70.240:FF:000007">
    <property type="entry name" value="Translation factor GUF1, mitochondrial"/>
    <property type="match status" value="1"/>
</dbReference>
<dbReference type="FunFam" id="3.30.70.2570:FF:000001">
    <property type="entry name" value="Translation factor GUF1, mitochondrial"/>
    <property type="match status" value="1"/>
</dbReference>
<dbReference type="FunFam" id="3.30.70.870:FF:000004">
    <property type="entry name" value="Translation factor GUF1, mitochondrial"/>
    <property type="match status" value="1"/>
</dbReference>
<dbReference type="Gene3D" id="3.30.70.240">
    <property type="match status" value="1"/>
</dbReference>
<dbReference type="Gene3D" id="3.30.70.2570">
    <property type="entry name" value="Elongation factor 4, C-terminal domain"/>
    <property type="match status" value="1"/>
</dbReference>
<dbReference type="Gene3D" id="3.30.70.870">
    <property type="entry name" value="Elongation Factor G (Translational Gtpase), domain 3"/>
    <property type="match status" value="1"/>
</dbReference>
<dbReference type="Gene3D" id="3.40.50.300">
    <property type="entry name" value="P-loop containing nucleotide triphosphate hydrolases"/>
    <property type="match status" value="1"/>
</dbReference>
<dbReference type="Gene3D" id="2.40.30.10">
    <property type="entry name" value="Translation factors"/>
    <property type="match status" value="1"/>
</dbReference>
<dbReference type="HAMAP" id="MF_00071">
    <property type="entry name" value="LepA"/>
    <property type="match status" value="1"/>
</dbReference>
<dbReference type="InterPro" id="IPR006297">
    <property type="entry name" value="EF-4"/>
</dbReference>
<dbReference type="InterPro" id="IPR035647">
    <property type="entry name" value="EFG_III/V"/>
</dbReference>
<dbReference type="InterPro" id="IPR000640">
    <property type="entry name" value="EFG_V-like"/>
</dbReference>
<dbReference type="InterPro" id="IPR004161">
    <property type="entry name" value="EFTu-like_2"/>
</dbReference>
<dbReference type="InterPro" id="IPR031157">
    <property type="entry name" value="G_TR_CS"/>
</dbReference>
<dbReference type="InterPro" id="IPR038363">
    <property type="entry name" value="LepA_C_sf"/>
</dbReference>
<dbReference type="InterPro" id="IPR013842">
    <property type="entry name" value="LepA_CTD"/>
</dbReference>
<dbReference type="InterPro" id="IPR035654">
    <property type="entry name" value="LepA_IV"/>
</dbReference>
<dbReference type="InterPro" id="IPR027417">
    <property type="entry name" value="P-loop_NTPase"/>
</dbReference>
<dbReference type="InterPro" id="IPR005225">
    <property type="entry name" value="Small_GTP-bd"/>
</dbReference>
<dbReference type="InterPro" id="IPR000795">
    <property type="entry name" value="T_Tr_GTP-bd_dom"/>
</dbReference>
<dbReference type="NCBIfam" id="TIGR01393">
    <property type="entry name" value="lepA"/>
    <property type="match status" value="1"/>
</dbReference>
<dbReference type="NCBIfam" id="TIGR00231">
    <property type="entry name" value="small_GTP"/>
    <property type="match status" value="1"/>
</dbReference>
<dbReference type="PANTHER" id="PTHR43512:SF4">
    <property type="entry name" value="TRANSLATION FACTOR GUF1 HOMOLOG, CHLOROPLASTIC"/>
    <property type="match status" value="1"/>
</dbReference>
<dbReference type="PANTHER" id="PTHR43512">
    <property type="entry name" value="TRANSLATION FACTOR GUF1-RELATED"/>
    <property type="match status" value="1"/>
</dbReference>
<dbReference type="Pfam" id="PF00679">
    <property type="entry name" value="EFG_C"/>
    <property type="match status" value="1"/>
</dbReference>
<dbReference type="Pfam" id="PF00009">
    <property type="entry name" value="GTP_EFTU"/>
    <property type="match status" value="1"/>
</dbReference>
<dbReference type="Pfam" id="PF03144">
    <property type="entry name" value="GTP_EFTU_D2"/>
    <property type="match status" value="1"/>
</dbReference>
<dbReference type="Pfam" id="PF06421">
    <property type="entry name" value="LepA_C"/>
    <property type="match status" value="1"/>
</dbReference>
<dbReference type="PRINTS" id="PR00315">
    <property type="entry name" value="ELONGATNFCT"/>
</dbReference>
<dbReference type="SMART" id="SM00838">
    <property type="entry name" value="EFG_C"/>
    <property type="match status" value="1"/>
</dbReference>
<dbReference type="SUPFAM" id="SSF54980">
    <property type="entry name" value="EF-G C-terminal domain-like"/>
    <property type="match status" value="2"/>
</dbReference>
<dbReference type="SUPFAM" id="SSF52540">
    <property type="entry name" value="P-loop containing nucleoside triphosphate hydrolases"/>
    <property type="match status" value="1"/>
</dbReference>
<dbReference type="PROSITE" id="PS00301">
    <property type="entry name" value="G_TR_1"/>
    <property type="match status" value="1"/>
</dbReference>
<dbReference type="PROSITE" id="PS51722">
    <property type="entry name" value="G_TR_2"/>
    <property type="match status" value="1"/>
</dbReference>
<feature type="chain" id="PRO_1000117011" description="Elongation factor 4">
    <location>
        <begin position="1"/>
        <end position="605"/>
    </location>
</feature>
<feature type="domain" description="tr-type G">
    <location>
        <begin position="11"/>
        <end position="193"/>
    </location>
</feature>
<feature type="binding site" evidence="1">
    <location>
        <begin position="23"/>
        <end position="28"/>
    </location>
    <ligand>
        <name>GTP</name>
        <dbReference type="ChEBI" id="CHEBI:37565"/>
    </ligand>
</feature>
<feature type="binding site" evidence="1">
    <location>
        <begin position="140"/>
        <end position="143"/>
    </location>
    <ligand>
        <name>GTP</name>
        <dbReference type="ChEBI" id="CHEBI:37565"/>
    </ligand>
</feature>
<name>LEPA_ACIB5</name>
<gene>
    <name evidence="1" type="primary">lepA</name>
    <name type="ordered locus">AB57_2964</name>
</gene>
<accession>B7I580</accession>
<comment type="function">
    <text evidence="1">Required for accurate and efficient protein synthesis under certain stress conditions. May act as a fidelity factor of the translation reaction, by catalyzing a one-codon backward translocation of tRNAs on improperly translocated ribosomes. Back-translocation proceeds from a post-translocation (POST) complex to a pre-translocation (PRE) complex, thus giving elongation factor G a second chance to translocate the tRNAs correctly. Binds to ribosomes in a GTP-dependent manner.</text>
</comment>
<comment type="catalytic activity">
    <reaction evidence="1">
        <text>GTP + H2O = GDP + phosphate + H(+)</text>
        <dbReference type="Rhea" id="RHEA:19669"/>
        <dbReference type="ChEBI" id="CHEBI:15377"/>
        <dbReference type="ChEBI" id="CHEBI:15378"/>
        <dbReference type="ChEBI" id="CHEBI:37565"/>
        <dbReference type="ChEBI" id="CHEBI:43474"/>
        <dbReference type="ChEBI" id="CHEBI:58189"/>
        <dbReference type="EC" id="3.6.5.n1"/>
    </reaction>
</comment>
<comment type="subcellular location">
    <subcellularLocation>
        <location evidence="1">Cell inner membrane</location>
        <topology evidence="1">Peripheral membrane protein</topology>
        <orientation evidence="1">Cytoplasmic side</orientation>
    </subcellularLocation>
</comment>
<comment type="similarity">
    <text evidence="1">Belongs to the TRAFAC class translation factor GTPase superfamily. Classic translation factor GTPase family. LepA subfamily.</text>
</comment>
<reference key="1">
    <citation type="journal article" date="2008" name="J. Bacteriol.">
        <title>Comparative genome sequence analysis of multidrug-resistant Acinetobacter baumannii.</title>
        <authorList>
            <person name="Adams M.D."/>
            <person name="Goglin K."/>
            <person name="Molyneaux N."/>
            <person name="Hujer K.M."/>
            <person name="Lavender H."/>
            <person name="Jamison J.J."/>
            <person name="MacDonald I.J."/>
            <person name="Martin K.M."/>
            <person name="Russo T."/>
            <person name="Campagnari A.A."/>
            <person name="Hujer A.M."/>
            <person name="Bonomo R.A."/>
            <person name="Gill S.R."/>
        </authorList>
    </citation>
    <scope>NUCLEOTIDE SEQUENCE [LARGE SCALE GENOMIC DNA]</scope>
    <source>
        <strain>AB0057</strain>
    </source>
</reference>
<organism>
    <name type="scientific">Acinetobacter baumannii (strain AB0057)</name>
    <dbReference type="NCBI Taxonomy" id="480119"/>
    <lineage>
        <taxon>Bacteria</taxon>
        <taxon>Pseudomonadati</taxon>
        <taxon>Pseudomonadota</taxon>
        <taxon>Gammaproteobacteria</taxon>
        <taxon>Moraxellales</taxon>
        <taxon>Moraxellaceae</taxon>
        <taxon>Acinetobacter</taxon>
        <taxon>Acinetobacter calcoaceticus/baumannii complex</taxon>
    </lineage>
</organism>
<proteinExistence type="inferred from homology"/>
<protein>
    <recommendedName>
        <fullName evidence="1">Elongation factor 4</fullName>
        <shortName evidence="1">EF-4</shortName>
        <ecNumber evidence="1">3.6.5.n1</ecNumber>
    </recommendedName>
    <alternativeName>
        <fullName evidence="1">Ribosomal back-translocase LepA</fullName>
    </alternativeName>
</protein>
<keyword id="KW-0997">Cell inner membrane</keyword>
<keyword id="KW-1003">Cell membrane</keyword>
<keyword id="KW-0342">GTP-binding</keyword>
<keyword id="KW-0378">Hydrolase</keyword>
<keyword id="KW-0472">Membrane</keyword>
<keyword id="KW-0547">Nucleotide-binding</keyword>
<keyword id="KW-0648">Protein biosynthesis</keyword>